<dbReference type="EMBL" id="AJ235272">
    <property type="protein sequence ID" value="CAA14951.1"/>
    <property type="status" value="ALT_FRAME"/>
    <property type="molecule type" value="Genomic_DNA"/>
</dbReference>
<dbReference type="EMBL" id="AJ235272">
    <property type="protein sequence ID" value="CAA14950.1"/>
    <property type="status" value="ALT_FRAME"/>
    <property type="molecule type" value="Genomic_DNA"/>
</dbReference>
<dbReference type="EMBL" id="AF200340">
    <property type="protein sequence ID" value="AAK31305.1"/>
    <property type="molecule type" value="Genomic_DNA"/>
</dbReference>
<dbReference type="PIR" id="D71653">
    <property type="entry name" value="D71653"/>
</dbReference>
<dbReference type="PIR" id="E71653">
    <property type="entry name" value="E71653"/>
</dbReference>
<dbReference type="RefSeq" id="NP_220874.1">
    <property type="nucleotide sequence ID" value="NC_000963.1"/>
</dbReference>
<dbReference type="RefSeq" id="NP_220875.1">
    <property type="nucleotide sequence ID" value="NC_000963.1"/>
</dbReference>
<dbReference type="SMR" id="Q9ZD49"/>
<dbReference type="STRING" id="272947.gene:17555578"/>
<dbReference type="EnsemblBacteria" id="CAA14950">
    <property type="protein sequence ID" value="CAA14950"/>
    <property type="gene ID" value="CAA14950"/>
</dbReference>
<dbReference type="EnsemblBacteria" id="CAA14951">
    <property type="protein sequence ID" value="CAA14951"/>
    <property type="gene ID" value="CAA14951"/>
</dbReference>
<dbReference type="KEGG" id="rpr:RP498"/>
<dbReference type="KEGG" id="rpr:RP499"/>
<dbReference type="PATRIC" id="fig|272947.5.peg.507"/>
<dbReference type="eggNOG" id="COG5183">
    <property type="taxonomic scope" value="Bacteria"/>
</dbReference>
<dbReference type="HOGENOM" id="CLU_009206_0_0_5"/>
<dbReference type="OrthoDB" id="7161039at2"/>
<dbReference type="Proteomes" id="UP000002480">
    <property type="component" value="Chromosome"/>
</dbReference>
<dbReference type="GO" id="GO:0005737">
    <property type="term" value="C:cytoplasm"/>
    <property type="evidence" value="ECO:0007669"/>
    <property type="project" value="UniProtKB-SubCell"/>
</dbReference>
<dbReference type="GO" id="GO:0052039">
    <property type="term" value="P:symbiont-mediated perturbation of host cytoskeleton"/>
    <property type="evidence" value="ECO:0000269"/>
    <property type="project" value="SigSci"/>
</dbReference>
<dbReference type="InterPro" id="IPR020954">
    <property type="entry name" value="Rickettsia_antigen_120kDa"/>
</dbReference>
<dbReference type="NCBIfam" id="NF038365">
    <property type="entry name" value="Sca4_fam"/>
    <property type="match status" value="1"/>
</dbReference>
<dbReference type="Pfam" id="PF12574">
    <property type="entry name" value="120_Rick_ant"/>
    <property type="match status" value="1"/>
</dbReference>
<sequence>MSKNGNQDISEFDPLNREFTEAEKQQQMQQEQEFFSQTILDIADDGFMVASSSQATPSISFLSNNRPHGDHKSDPITEAIRKEILEKQRDILREYFVNTNPELAEQIAKEEDDRKFRAFLSNQDNYALINKAFEDTKTKKNLEKAEIVGYKNVLSTYSVANGYQGGFQPVQWENQVSASDLRSTVVKNDEGEELCTLNETTVKTKDLIVAKQDGTQVQINSYREINFPIKLDKANGSMHLSMVALKADGTKPAKDKAVYFTAHYEEGPNGKPQLKEISSPQPLKFVGTGDDAVAYIEHGGEIYTLAVTRGKYKEMMKEVALNHGQSVALSQTIAEDLTHVQGPSHETHKPIIIPNQELESSIEQHTSQQVPPITTFNKSLQPKISQIHQLQPQQAQSSGIPNPVLNAANALSTSMQDLLNNINSYLTKNQDINKQSDLIKEAAIAILNNKKSDFAEKQYNIIDLAKNIFSNKDIIADAKVNVVNTLLETIQNDQNTLDIKKSKILEDTVAITLNSENIELKQKQQILEKVVDIGLSIKDDISRVVAVDSIMDTVIKSNIANEDKEKIFITVFDQINSYEFSNVAKQKLLDSILKKTAETQVLSPEQQQLMNQNLDNITTEHTKRDTIEKVNNILLEPLSNTALKTTNIQVMTSNVLDSPVQIEMKSKLIQVVTKTVAESALVEPKDKTEIVKGIGKTIVTHSDTSLPLHDKVVIMGSVAKGIVESKNDLLDRELIIAGLVDGIYEAKGDNAVVHAISSMIANSNINQSEKEALKRSQDVVSEKVLDKEIQNLDRELKAQNINESKLHDDIYNKTQDVANALKNVITTVLDDNSGQRGVSEEAPKKVSSLLNDISKRTIEKINNLRAMLSQDGNLKTFEEKKDEATKKVDELVKAFDNKSSTEEQQNFIKSNLIDNKTLSREIRLQIIDNLLKAQAQKRAETIENLSAKTEDVRVISGKSELKPISQDEPYIQKAKMVVERDRVDIKDNIKIMSALINARDSIQSENFNKSIHIKKESSFPQR</sequence>
<reference key="1">
    <citation type="journal article" date="1998" name="Nature">
        <title>The genome sequence of Rickettsia prowazekii and the origin of mitochondria.</title>
        <authorList>
            <person name="Andersson S.G.E."/>
            <person name="Zomorodipour A."/>
            <person name="Andersson J.O."/>
            <person name="Sicheritz-Ponten T."/>
            <person name="Alsmark U.C.M."/>
            <person name="Podowski R.M."/>
            <person name="Naeslund A.K."/>
            <person name="Eriksson A.-S."/>
            <person name="Winkler H.H."/>
            <person name="Kurland C.G."/>
        </authorList>
    </citation>
    <scope>NUCLEOTIDE SEQUENCE [LARGE SCALE GENOMIC DNA]</scope>
    <source>
        <strain>Madrid E</strain>
    </source>
</reference>
<reference key="2">
    <citation type="journal article" date="2001" name="Int. J. Syst. Evol. Microbiol.">
        <title>Phylogeny of Rickettsia spp. inferred by comparing sequences of 'gene D', which encodes an intracytoplasmic protein.</title>
        <authorList>
            <person name="Sekeyova Z."/>
            <person name="Roux V."/>
            <person name="Raoult D."/>
        </authorList>
    </citation>
    <scope>NUCLEOTIDE SEQUENCE [GENOMIC DNA] OF 11-1016</scope>
</reference>
<keyword id="KW-0963">Cytoplasm</keyword>
<keyword id="KW-1185">Reference proteome</keyword>
<proteinExistence type="predicted"/>
<name>SCA4_RICPR</name>
<accession>Q9ZD49</accession>
<accession>Q9AJ36</accession>
<accession>Q9ZD48</accession>
<comment type="subcellular location">
    <subcellularLocation>
        <location evidence="2">Cytoplasm</location>
    </subcellularLocation>
</comment>
<comment type="sequence caution" evidence="2">
    <conflict type="frameshift">
        <sequence resource="EMBL-CDS" id="CAA14950"/>
    </conflict>
</comment>
<feature type="chain" id="PRO_0000097615" description="Antigenic heat-stable 120 kDa protein">
    <location>
        <begin position="1"/>
        <end position="1022"/>
    </location>
</feature>
<feature type="region of interest" description="Disordered" evidence="1">
    <location>
        <begin position="1"/>
        <end position="33"/>
    </location>
</feature>
<feature type="compositionally biased region" description="Basic and acidic residues" evidence="1">
    <location>
        <begin position="14"/>
        <end position="24"/>
    </location>
</feature>
<feature type="sequence conflict" description="In Ref. 2; AAK31305." evidence="2" ref="2">
    <original>EFDPL</original>
    <variation>RPGLV</variation>
    <location>
        <begin position="11"/>
        <end position="15"/>
    </location>
</feature>
<feature type="sequence conflict" description="In Ref. 2; AAK31305." evidence="2" ref="2">
    <original>H</original>
    <variation>Y</variation>
    <location>
        <position position="365"/>
    </location>
</feature>
<feature type="sequence conflict" description="In Ref. 2; AAK31305." evidence="2" ref="2">
    <location>
        <position position="413"/>
    </location>
</feature>
<feature type="sequence conflict" description="In Ref. 2; AAK31305." evidence="2" ref="2">
    <original>G</original>
    <variation>R</variation>
    <location>
        <position position="957"/>
    </location>
</feature>
<organism>
    <name type="scientific">Rickettsia prowazekii (strain Madrid E)</name>
    <dbReference type="NCBI Taxonomy" id="272947"/>
    <lineage>
        <taxon>Bacteria</taxon>
        <taxon>Pseudomonadati</taxon>
        <taxon>Pseudomonadota</taxon>
        <taxon>Alphaproteobacteria</taxon>
        <taxon>Rickettsiales</taxon>
        <taxon>Rickettsiaceae</taxon>
        <taxon>Rickettsieae</taxon>
        <taxon>Rickettsia</taxon>
        <taxon>typhus group</taxon>
    </lineage>
</organism>
<protein>
    <recommendedName>
        <fullName>Antigenic heat-stable 120 kDa protein</fullName>
    </recommendedName>
    <alternativeName>
        <fullName>120 kDa antigen</fullName>
    </alternativeName>
    <alternativeName>
        <fullName>Protein PS 120</fullName>
        <shortName>PS120</shortName>
    </alternativeName>
</protein>
<gene>
    <name type="primary">sca4</name>
    <name type="ordered locus">RP498/RP499</name>
</gene>
<evidence type="ECO:0000256" key="1">
    <source>
        <dbReference type="SAM" id="MobiDB-lite"/>
    </source>
</evidence>
<evidence type="ECO:0000305" key="2"/>